<accession>B3CN44</accession>
<comment type="function">
    <text evidence="1">Binds to the 23S rRNA.</text>
</comment>
<comment type="subunit">
    <text evidence="1">Part of the 50S ribosomal subunit.</text>
</comment>
<comment type="similarity">
    <text evidence="1">Belongs to the universal ribosomal protein uL15 family.</text>
</comment>
<sequence>MNDAVKLNSIFTKLSKKKKPKLLGRGIGCGKGKTSGRGHKGQKARSGVSINGFEGGQQSIYTRLPKRGFKPIRKNLYSIFNVGDVQCLMEAKKIVKDSIIDKELLHKLGFIRSVKSKIKLLNKGKLREKFVFHVDFASEAAKRSVASVGGSVEILS</sequence>
<name>RL15_WOLPP</name>
<feature type="chain" id="PRO_1000142901" description="Large ribosomal subunit protein uL15">
    <location>
        <begin position="1"/>
        <end position="156"/>
    </location>
</feature>
<feature type="region of interest" description="Disordered" evidence="2">
    <location>
        <begin position="25"/>
        <end position="48"/>
    </location>
</feature>
<feature type="compositionally biased region" description="Basic residues" evidence="2">
    <location>
        <begin position="34"/>
        <end position="43"/>
    </location>
</feature>
<evidence type="ECO:0000255" key="1">
    <source>
        <dbReference type="HAMAP-Rule" id="MF_01341"/>
    </source>
</evidence>
<evidence type="ECO:0000256" key="2">
    <source>
        <dbReference type="SAM" id="MobiDB-lite"/>
    </source>
</evidence>
<evidence type="ECO:0000305" key="3"/>
<dbReference type="EMBL" id="AM999887">
    <property type="protein sequence ID" value="CAQ55292.1"/>
    <property type="molecule type" value="Genomic_DNA"/>
</dbReference>
<dbReference type="RefSeq" id="WP_007302550.1">
    <property type="nucleotide sequence ID" value="NC_010981.1"/>
</dbReference>
<dbReference type="SMR" id="B3CN44"/>
<dbReference type="KEGG" id="wpi:WP1184"/>
<dbReference type="eggNOG" id="COG0200">
    <property type="taxonomic scope" value="Bacteria"/>
</dbReference>
<dbReference type="HOGENOM" id="CLU_055188_4_0_5"/>
<dbReference type="Proteomes" id="UP000008814">
    <property type="component" value="Chromosome"/>
</dbReference>
<dbReference type="GO" id="GO:0022625">
    <property type="term" value="C:cytosolic large ribosomal subunit"/>
    <property type="evidence" value="ECO:0007669"/>
    <property type="project" value="TreeGrafter"/>
</dbReference>
<dbReference type="GO" id="GO:0019843">
    <property type="term" value="F:rRNA binding"/>
    <property type="evidence" value="ECO:0007669"/>
    <property type="project" value="UniProtKB-UniRule"/>
</dbReference>
<dbReference type="GO" id="GO:0003735">
    <property type="term" value="F:structural constituent of ribosome"/>
    <property type="evidence" value="ECO:0007669"/>
    <property type="project" value="InterPro"/>
</dbReference>
<dbReference type="GO" id="GO:0006412">
    <property type="term" value="P:translation"/>
    <property type="evidence" value="ECO:0007669"/>
    <property type="project" value="UniProtKB-UniRule"/>
</dbReference>
<dbReference type="Gene3D" id="3.100.10.10">
    <property type="match status" value="1"/>
</dbReference>
<dbReference type="HAMAP" id="MF_01341">
    <property type="entry name" value="Ribosomal_uL15"/>
    <property type="match status" value="1"/>
</dbReference>
<dbReference type="InterPro" id="IPR030878">
    <property type="entry name" value="Ribosomal_uL15"/>
</dbReference>
<dbReference type="InterPro" id="IPR021131">
    <property type="entry name" value="Ribosomal_uL15/eL18"/>
</dbReference>
<dbReference type="InterPro" id="IPR036227">
    <property type="entry name" value="Ribosomal_uL15/eL18_sf"/>
</dbReference>
<dbReference type="InterPro" id="IPR005749">
    <property type="entry name" value="Ribosomal_uL15_bac-type"/>
</dbReference>
<dbReference type="NCBIfam" id="TIGR01071">
    <property type="entry name" value="rplO_bact"/>
    <property type="match status" value="1"/>
</dbReference>
<dbReference type="PANTHER" id="PTHR12934">
    <property type="entry name" value="50S RIBOSOMAL PROTEIN L15"/>
    <property type="match status" value="1"/>
</dbReference>
<dbReference type="PANTHER" id="PTHR12934:SF11">
    <property type="entry name" value="LARGE RIBOSOMAL SUBUNIT PROTEIN UL15M"/>
    <property type="match status" value="1"/>
</dbReference>
<dbReference type="Pfam" id="PF00828">
    <property type="entry name" value="Ribosomal_L27A"/>
    <property type="match status" value="1"/>
</dbReference>
<dbReference type="SUPFAM" id="SSF52080">
    <property type="entry name" value="Ribosomal proteins L15p and L18e"/>
    <property type="match status" value="1"/>
</dbReference>
<protein>
    <recommendedName>
        <fullName evidence="1">Large ribosomal subunit protein uL15</fullName>
    </recommendedName>
    <alternativeName>
        <fullName evidence="3">50S ribosomal protein L15</fullName>
    </alternativeName>
</protein>
<organism>
    <name type="scientific">Wolbachia pipientis subsp. Culex pipiens (strain wPip)</name>
    <dbReference type="NCBI Taxonomy" id="570417"/>
    <lineage>
        <taxon>Bacteria</taxon>
        <taxon>Pseudomonadati</taxon>
        <taxon>Pseudomonadota</taxon>
        <taxon>Alphaproteobacteria</taxon>
        <taxon>Rickettsiales</taxon>
        <taxon>Anaplasmataceae</taxon>
        <taxon>Wolbachieae</taxon>
        <taxon>Wolbachia</taxon>
    </lineage>
</organism>
<gene>
    <name evidence="1" type="primary">rplO</name>
    <name type="ordered locus">WP1184</name>
</gene>
<proteinExistence type="inferred from homology"/>
<keyword id="KW-0687">Ribonucleoprotein</keyword>
<keyword id="KW-0689">Ribosomal protein</keyword>
<keyword id="KW-0694">RNA-binding</keyword>
<keyword id="KW-0699">rRNA-binding</keyword>
<reference key="1">
    <citation type="journal article" date="2008" name="Mol. Biol. Evol.">
        <title>Genome evolution of Wolbachia strain wPip from the Culex pipiens group.</title>
        <authorList>
            <person name="Klasson L."/>
            <person name="Walker T."/>
            <person name="Sebaihia M."/>
            <person name="Sanders M.J."/>
            <person name="Quail M.A."/>
            <person name="Lord A."/>
            <person name="Sanders S."/>
            <person name="Earl J."/>
            <person name="O'Neill S.L."/>
            <person name="Thomson N."/>
            <person name="Sinkins S.P."/>
            <person name="Parkhill J."/>
        </authorList>
    </citation>
    <scope>NUCLEOTIDE SEQUENCE [LARGE SCALE GENOMIC DNA]</scope>
    <source>
        <strain>wPip</strain>
    </source>
</reference>